<reference key="1">
    <citation type="journal article" date="2004" name="Nat. Genet.">
        <title>Complete sequencing and characterization of 21,243 full-length human cDNAs.</title>
        <authorList>
            <person name="Ota T."/>
            <person name="Suzuki Y."/>
            <person name="Nishikawa T."/>
            <person name="Otsuki T."/>
            <person name="Sugiyama T."/>
            <person name="Irie R."/>
            <person name="Wakamatsu A."/>
            <person name="Hayashi K."/>
            <person name="Sato H."/>
            <person name="Nagai K."/>
            <person name="Kimura K."/>
            <person name="Makita H."/>
            <person name="Sekine M."/>
            <person name="Obayashi M."/>
            <person name="Nishi T."/>
            <person name="Shibahara T."/>
            <person name="Tanaka T."/>
            <person name="Ishii S."/>
            <person name="Yamamoto J."/>
            <person name="Saito K."/>
            <person name="Kawai Y."/>
            <person name="Isono Y."/>
            <person name="Nakamura Y."/>
            <person name="Nagahari K."/>
            <person name="Murakami K."/>
            <person name="Yasuda T."/>
            <person name="Iwayanagi T."/>
            <person name="Wagatsuma M."/>
            <person name="Shiratori A."/>
            <person name="Sudo H."/>
            <person name="Hosoiri T."/>
            <person name="Kaku Y."/>
            <person name="Kodaira H."/>
            <person name="Kondo H."/>
            <person name="Sugawara M."/>
            <person name="Takahashi M."/>
            <person name="Kanda K."/>
            <person name="Yokoi T."/>
            <person name="Furuya T."/>
            <person name="Kikkawa E."/>
            <person name="Omura Y."/>
            <person name="Abe K."/>
            <person name="Kamihara K."/>
            <person name="Katsuta N."/>
            <person name="Sato K."/>
            <person name="Tanikawa M."/>
            <person name="Yamazaki M."/>
            <person name="Ninomiya K."/>
            <person name="Ishibashi T."/>
            <person name="Yamashita H."/>
            <person name="Murakawa K."/>
            <person name="Fujimori K."/>
            <person name="Tanai H."/>
            <person name="Kimata M."/>
            <person name="Watanabe M."/>
            <person name="Hiraoka S."/>
            <person name="Chiba Y."/>
            <person name="Ishida S."/>
            <person name="Ono Y."/>
            <person name="Takiguchi S."/>
            <person name="Watanabe S."/>
            <person name="Yosida M."/>
            <person name="Hotuta T."/>
            <person name="Kusano J."/>
            <person name="Kanehori K."/>
            <person name="Takahashi-Fujii A."/>
            <person name="Hara H."/>
            <person name="Tanase T.-O."/>
            <person name="Nomura Y."/>
            <person name="Togiya S."/>
            <person name="Komai F."/>
            <person name="Hara R."/>
            <person name="Takeuchi K."/>
            <person name="Arita M."/>
            <person name="Imose N."/>
            <person name="Musashino K."/>
            <person name="Yuuki H."/>
            <person name="Oshima A."/>
            <person name="Sasaki N."/>
            <person name="Aotsuka S."/>
            <person name="Yoshikawa Y."/>
            <person name="Matsunawa H."/>
            <person name="Ichihara T."/>
            <person name="Shiohata N."/>
            <person name="Sano S."/>
            <person name="Moriya S."/>
            <person name="Momiyama H."/>
            <person name="Satoh N."/>
            <person name="Takami S."/>
            <person name="Terashima Y."/>
            <person name="Suzuki O."/>
            <person name="Nakagawa S."/>
            <person name="Senoh A."/>
            <person name="Mizoguchi H."/>
            <person name="Goto Y."/>
            <person name="Shimizu F."/>
            <person name="Wakebe H."/>
            <person name="Hishigaki H."/>
            <person name="Watanabe T."/>
            <person name="Sugiyama A."/>
            <person name="Takemoto M."/>
            <person name="Kawakami B."/>
            <person name="Yamazaki M."/>
            <person name="Watanabe K."/>
            <person name="Kumagai A."/>
            <person name="Itakura S."/>
            <person name="Fukuzumi Y."/>
            <person name="Fujimori Y."/>
            <person name="Komiyama M."/>
            <person name="Tashiro H."/>
            <person name="Tanigami A."/>
            <person name="Fujiwara T."/>
            <person name="Ono T."/>
            <person name="Yamada K."/>
            <person name="Fujii Y."/>
            <person name="Ozaki K."/>
            <person name="Hirao M."/>
            <person name="Ohmori Y."/>
            <person name="Kawabata A."/>
            <person name="Hikiji T."/>
            <person name="Kobatake N."/>
            <person name="Inagaki H."/>
            <person name="Ikema Y."/>
            <person name="Okamoto S."/>
            <person name="Okitani R."/>
            <person name="Kawakami T."/>
            <person name="Noguchi S."/>
            <person name="Itoh T."/>
            <person name="Shigeta K."/>
            <person name="Senba T."/>
            <person name="Matsumura K."/>
            <person name="Nakajima Y."/>
            <person name="Mizuno T."/>
            <person name="Morinaga M."/>
            <person name="Sasaki M."/>
            <person name="Togashi T."/>
            <person name="Oyama M."/>
            <person name="Hata H."/>
            <person name="Watanabe M."/>
            <person name="Komatsu T."/>
            <person name="Mizushima-Sugano J."/>
            <person name="Satoh T."/>
            <person name="Shirai Y."/>
            <person name="Takahashi Y."/>
            <person name="Nakagawa K."/>
            <person name="Okumura K."/>
            <person name="Nagase T."/>
            <person name="Nomura N."/>
            <person name="Kikuchi H."/>
            <person name="Masuho Y."/>
            <person name="Yamashita R."/>
            <person name="Nakai K."/>
            <person name="Yada T."/>
            <person name="Nakamura Y."/>
            <person name="Ohara O."/>
            <person name="Isogai T."/>
            <person name="Sugano S."/>
        </authorList>
    </citation>
    <scope>NUCLEOTIDE SEQUENCE [LARGE SCALE MRNA]</scope>
    <source>
        <tissue>Testis</tissue>
    </source>
</reference>
<reference key="2">
    <citation type="journal article" date="2004" name="Nature">
        <title>The DNA sequence and comparative analysis of human chromosome 10.</title>
        <authorList>
            <person name="Deloukas P."/>
            <person name="Earthrowl M.E."/>
            <person name="Grafham D.V."/>
            <person name="Rubenfield M."/>
            <person name="French L."/>
            <person name="Steward C.A."/>
            <person name="Sims S.K."/>
            <person name="Jones M.C."/>
            <person name="Searle S."/>
            <person name="Scott C."/>
            <person name="Howe K."/>
            <person name="Hunt S.E."/>
            <person name="Andrews T.D."/>
            <person name="Gilbert J.G.R."/>
            <person name="Swarbreck D."/>
            <person name="Ashurst J.L."/>
            <person name="Taylor A."/>
            <person name="Battles J."/>
            <person name="Bird C.P."/>
            <person name="Ainscough R."/>
            <person name="Almeida J.P."/>
            <person name="Ashwell R.I.S."/>
            <person name="Ambrose K.D."/>
            <person name="Babbage A.K."/>
            <person name="Bagguley C.L."/>
            <person name="Bailey J."/>
            <person name="Banerjee R."/>
            <person name="Bates K."/>
            <person name="Beasley H."/>
            <person name="Bray-Allen S."/>
            <person name="Brown A.J."/>
            <person name="Brown J.Y."/>
            <person name="Burford D.C."/>
            <person name="Burrill W."/>
            <person name="Burton J."/>
            <person name="Cahill P."/>
            <person name="Camire D."/>
            <person name="Carter N.P."/>
            <person name="Chapman J.C."/>
            <person name="Clark S.Y."/>
            <person name="Clarke G."/>
            <person name="Clee C.M."/>
            <person name="Clegg S."/>
            <person name="Corby N."/>
            <person name="Coulson A."/>
            <person name="Dhami P."/>
            <person name="Dutta I."/>
            <person name="Dunn M."/>
            <person name="Faulkner L."/>
            <person name="Frankish A."/>
            <person name="Frankland J.A."/>
            <person name="Garner P."/>
            <person name="Garnett J."/>
            <person name="Gribble S."/>
            <person name="Griffiths C."/>
            <person name="Grocock R."/>
            <person name="Gustafson E."/>
            <person name="Hammond S."/>
            <person name="Harley J.L."/>
            <person name="Hart E."/>
            <person name="Heath P.D."/>
            <person name="Ho T.P."/>
            <person name="Hopkins B."/>
            <person name="Horne J."/>
            <person name="Howden P.J."/>
            <person name="Huckle E."/>
            <person name="Hynds C."/>
            <person name="Johnson C."/>
            <person name="Johnson D."/>
            <person name="Kana A."/>
            <person name="Kay M."/>
            <person name="Kimberley A.M."/>
            <person name="Kershaw J.K."/>
            <person name="Kokkinaki M."/>
            <person name="Laird G.K."/>
            <person name="Lawlor S."/>
            <person name="Lee H.M."/>
            <person name="Leongamornlert D.A."/>
            <person name="Laird G."/>
            <person name="Lloyd C."/>
            <person name="Lloyd D.M."/>
            <person name="Loveland J."/>
            <person name="Lovell J."/>
            <person name="McLaren S."/>
            <person name="McLay K.E."/>
            <person name="McMurray A."/>
            <person name="Mashreghi-Mohammadi M."/>
            <person name="Matthews L."/>
            <person name="Milne S."/>
            <person name="Nickerson T."/>
            <person name="Nguyen M."/>
            <person name="Overton-Larty E."/>
            <person name="Palmer S.A."/>
            <person name="Pearce A.V."/>
            <person name="Peck A.I."/>
            <person name="Pelan S."/>
            <person name="Phillimore B."/>
            <person name="Porter K."/>
            <person name="Rice C.M."/>
            <person name="Rogosin A."/>
            <person name="Ross M.T."/>
            <person name="Sarafidou T."/>
            <person name="Sehra H.K."/>
            <person name="Shownkeen R."/>
            <person name="Skuce C.D."/>
            <person name="Smith M."/>
            <person name="Standring L."/>
            <person name="Sycamore N."/>
            <person name="Tester J."/>
            <person name="Thorpe A."/>
            <person name="Torcasso W."/>
            <person name="Tracey A."/>
            <person name="Tromans A."/>
            <person name="Tsolas J."/>
            <person name="Wall M."/>
            <person name="Walsh J."/>
            <person name="Wang H."/>
            <person name="Weinstock K."/>
            <person name="West A.P."/>
            <person name="Willey D.L."/>
            <person name="Whitehead S.L."/>
            <person name="Wilming L."/>
            <person name="Wray P.W."/>
            <person name="Young L."/>
            <person name="Chen Y."/>
            <person name="Lovering R.C."/>
            <person name="Moschonas N.K."/>
            <person name="Siebert R."/>
            <person name="Fechtel K."/>
            <person name="Bentley D."/>
            <person name="Durbin R.M."/>
            <person name="Hubbard T."/>
            <person name="Doucette-Stamm L."/>
            <person name="Beck S."/>
            <person name="Smith D.R."/>
            <person name="Rogers J."/>
        </authorList>
    </citation>
    <scope>NUCLEOTIDE SEQUENCE [LARGE SCALE GENOMIC DNA]</scope>
</reference>
<proteinExistence type="evidence at transcript level"/>
<comment type="function">
    <text evidence="1">May be involved in transcriptional regulation.</text>
</comment>
<comment type="subcellular location">
    <subcellularLocation>
        <location evidence="4">Nucleus</location>
    </subcellularLocation>
</comment>
<comment type="similarity">
    <text evidence="4">Belongs to the krueppel C2H2-type zinc-finger protein family.</text>
</comment>
<comment type="sequence caution" evidence="4">
    <conflict type="erroneous initiation">
        <sequence resource="EMBL-CDS" id="BAH13711"/>
    </conflict>
    <text>Extended N-terminus.</text>
</comment>
<evidence type="ECO:0000250" key="1"/>
<evidence type="ECO:0000255" key="2">
    <source>
        <dbReference type="PROSITE-ProRule" id="PRU00042"/>
    </source>
</evidence>
<evidence type="ECO:0000255" key="3">
    <source>
        <dbReference type="PROSITE-ProRule" id="PRU00119"/>
    </source>
</evidence>
<evidence type="ECO:0000305" key="4"/>
<organism>
    <name type="scientific">Homo sapiens</name>
    <name type="common">Human</name>
    <dbReference type="NCBI Taxonomy" id="9606"/>
    <lineage>
        <taxon>Eukaryota</taxon>
        <taxon>Metazoa</taxon>
        <taxon>Chordata</taxon>
        <taxon>Craniata</taxon>
        <taxon>Vertebrata</taxon>
        <taxon>Euteleostomi</taxon>
        <taxon>Mammalia</taxon>
        <taxon>Eutheria</taxon>
        <taxon>Euarchontoglires</taxon>
        <taxon>Primates</taxon>
        <taxon>Haplorrhini</taxon>
        <taxon>Catarrhini</taxon>
        <taxon>Hominidae</taxon>
        <taxon>Homo</taxon>
    </lineage>
</organism>
<protein>
    <recommendedName>
        <fullName>Zinc finger protein 487</fullName>
    </recommendedName>
    <alternativeName>
        <fullName>KRAB domain only protein 1</fullName>
    </alternativeName>
</protein>
<feature type="chain" id="PRO_0000344976" description="Zinc finger protein 487">
    <location>
        <begin position="1"/>
        <end position="207"/>
    </location>
</feature>
<feature type="domain" description="KRAB" evidence="3">
    <location>
        <begin position="1"/>
        <end position="43"/>
    </location>
</feature>
<feature type="zinc finger region" description="C2H2-type; atypical" evidence="2">
    <location>
        <begin position="177"/>
        <end position="202"/>
    </location>
</feature>
<feature type="sequence variant" id="VAR_045636" description="In dbSNP:rs11598660.">
    <original>R</original>
    <variation>S</variation>
    <location>
        <position position="55"/>
    </location>
</feature>
<accession>B1APH4</accession>
<accession>A0A494C0H0</accession>
<accession>B1APH5</accession>
<accession>B7Z7S5</accession>
<keyword id="KW-0238">DNA-binding</keyword>
<keyword id="KW-0479">Metal-binding</keyword>
<keyword id="KW-0539">Nucleus</keyword>
<keyword id="KW-1185">Reference proteome</keyword>
<keyword id="KW-0677">Repeat</keyword>
<keyword id="KW-0804">Transcription</keyword>
<keyword id="KW-0805">Transcription regulation</keyword>
<keyword id="KW-0862">Zinc</keyword>
<keyword id="KW-0863">Zinc-finger</keyword>
<sequence length="207" mass="23773">MLENYSLLLSVGYCITKPEVVCKLEHGQVLWILEEESPSQSHLDCCIDDDLMEKRQENQDQHLQKVDFVNNKTLTMDRNGVLGKTFSLDTNPILSRKIRGNCDSSGMNLNNISELIISNRSSFVRNPAECNVRGKFLLCMKRENPYARGKPLEYDGNGKAVSQNEDLFRHQYIQTLKQCFEYNQCGKAFHEEAACSTHKRVCSWETL</sequence>
<dbReference type="EMBL" id="AK302442">
    <property type="protein sequence ID" value="BAH13711.1"/>
    <property type="status" value="ALT_INIT"/>
    <property type="molecule type" value="mRNA"/>
</dbReference>
<dbReference type="EMBL" id="AL450326">
    <property type="status" value="NOT_ANNOTATED_CDS"/>
    <property type="molecule type" value="Genomic_DNA"/>
</dbReference>
<dbReference type="RefSeq" id="NP_001342373.2">
    <property type="nucleotide sequence ID" value="NM_001355444.3"/>
</dbReference>
<dbReference type="RefSeq" id="NP_001342374.2">
    <property type="nucleotide sequence ID" value="NM_001355445.3"/>
</dbReference>
<dbReference type="RefSeq" id="NP_001342375.2">
    <property type="nucleotide sequence ID" value="NM_001355446.3"/>
</dbReference>
<dbReference type="SMR" id="B1APH4"/>
<dbReference type="IntAct" id="B1APH4">
    <property type="interactions" value="1"/>
</dbReference>
<dbReference type="MINT" id="B1APH4"/>
<dbReference type="STRING" id="9606.ENSP00000498490"/>
<dbReference type="iPTMnet" id="B1APH4"/>
<dbReference type="PhosphoSitePlus" id="B1APH4"/>
<dbReference type="BioMuta" id="ZNF487"/>
<dbReference type="jPOST" id="B1APH4"/>
<dbReference type="MassIVE" id="B1APH4"/>
<dbReference type="PaxDb" id="9606-ENSP00000392335"/>
<dbReference type="PeptideAtlas" id="B1APH4"/>
<dbReference type="Antibodypedia" id="50281">
    <property type="antibodies" value="3 antibodies from 3 providers"/>
</dbReference>
<dbReference type="GeneID" id="642819"/>
<dbReference type="MANE-Select" id="ENST00000437590.4">
    <property type="protein sequence ID" value="ENSP00000392335.2"/>
    <property type="RefSeq nucleotide sequence ID" value="NM_001355444.3"/>
    <property type="RefSeq protein sequence ID" value="NP_001342373.2"/>
</dbReference>
<dbReference type="AGR" id="HGNC:23488"/>
<dbReference type="GeneCards" id="ZNF487"/>
<dbReference type="HGNC" id="HGNC:23488">
    <property type="gene designation" value="ZNF487"/>
</dbReference>
<dbReference type="neXtProt" id="NX_B1APH4"/>
<dbReference type="OpenTargets" id="ENSG00000243660"/>
<dbReference type="VEuPathDB" id="HostDB:ENSG00000243660"/>
<dbReference type="eggNOG" id="KOG1721">
    <property type="taxonomic scope" value="Eukaryota"/>
</dbReference>
<dbReference type="GeneTree" id="ENSGT00940000162638"/>
<dbReference type="InParanoid" id="B1APH4"/>
<dbReference type="OMA" id="HGEVLWI"/>
<dbReference type="OrthoDB" id="9835557at2759"/>
<dbReference type="PAN-GO" id="B1APH4">
    <property type="GO annotations" value="3 GO annotations based on evolutionary models"/>
</dbReference>
<dbReference type="PhylomeDB" id="B1APH4"/>
<dbReference type="TreeFam" id="TF337898"/>
<dbReference type="PathwayCommons" id="B1APH4"/>
<dbReference type="SignaLink" id="B1APH4"/>
<dbReference type="Pharos" id="B1APH4">
    <property type="development level" value="Tdark"/>
</dbReference>
<dbReference type="PRO" id="PR:B1APH4"/>
<dbReference type="Proteomes" id="UP000005640">
    <property type="component" value="Chromosome 10"/>
</dbReference>
<dbReference type="RNAct" id="B1APH4">
    <property type="molecule type" value="protein"/>
</dbReference>
<dbReference type="Bgee" id="ENSG00000243660">
    <property type="expression patterns" value="Expressed in bronchial epithelial cell and 152 other cell types or tissues"/>
</dbReference>
<dbReference type="ExpressionAtlas" id="A0A494C0H0">
    <property type="expression patterns" value="baseline and differential"/>
</dbReference>
<dbReference type="GO" id="GO:0000785">
    <property type="term" value="C:chromatin"/>
    <property type="evidence" value="ECO:0000247"/>
    <property type="project" value="NTNU_SB"/>
</dbReference>
<dbReference type="GO" id="GO:0005634">
    <property type="term" value="C:nucleus"/>
    <property type="evidence" value="ECO:0000318"/>
    <property type="project" value="GO_Central"/>
</dbReference>
<dbReference type="GO" id="GO:0000981">
    <property type="term" value="F:DNA-binding transcription factor activity, RNA polymerase II-specific"/>
    <property type="evidence" value="ECO:0000247"/>
    <property type="project" value="NTNU_SB"/>
</dbReference>
<dbReference type="GO" id="GO:0000977">
    <property type="term" value="F:RNA polymerase II transcription regulatory region sequence-specific DNA binding"/>
    <property type="evidence" value="ECO:0000318"/>
    <property type="project" value="GO_Central"/>
</dbReference>
<dbReference type="GO" id="GO:0008270">
    <property type="term" value="F:zinc ion binding"/>
    <property type="evidence" value="ECO:0007669"/>
    <property type="project" value="UniProtKB-KW"/>
</dbReference>
<dbReference type="GO" id="GO:0006357">
    <property type="term" value="P:regulation of transcription by RNA polymerase II"/>
    <property type="evidence" value="ECO:0000318"/>
    <property type="project" value="GO_Central"/>
</dbReference>
<dbReference type="CDD" id="cd07765">
    <property type="entry name" value="KRAB_A-box"/>
    <property type="match status" value="1"/>
</dbReference>
<dbReference type="FunFam" id="3.30.160.60:FF:000003">
    <property type="entry name" value="Zinc finger protein 3 homolog"/>
    <property type="match status" value="1"/>
</dbReference>
<dbReference type="FunFam" id="3.30.160.60:FF:002343">
    <property type="entry name" value="Zinc finger protein 33A"/>
    <property type="match status" value="2"/>
</dbReference>
<dbReference type="Gene3D" id="6.10.140.140">
    <property type="match status" value="1"/>
</dbReference>
<dbReference type="Gene3D" id="3.30.160.60">
    <property type="entry name" value="Classic Zinc Finger"/>
    <property type="match status" value="3"/>
</dbReference>
<dbReference type="InterPro" id="IPR001909">
    <property type="entry name" value="KRAB"/>
</dbReference>
<dbReference type="InterPro" id="IPR036051">
    <property type="entry name" value="KRAB_dom_sf"/>
</dbReference>
<dbReference type="InterPro" id="IPR050826">
    <property type="entry name" value="Krueppel_C2H2_ZnFinger"/>
</dbReference>
<dbReference type="InterPro" id="IPR036236">
    <property type="entry name" value="Znf_C2H2_sf"/>
</dbReference>
<dbReference type="InterPro" id="IPR013087">
    <property type="entry name" value="Znf_C2H2_type"/>
</dbReference>
<dbReference type="PANTHER" id="PTHR24377">
    <property type="entry name" value="IP01015P-RELATED"/>
    <property type="match status" value="1"/>
</dbReference>
<dbReference type="Pfam" id="PF01352">
    <property type="entry name" value="KRAB"/>
    <property type="match status" value="2"/>
</dbReference>
<dbReference type="Pfam" id="PF00096">
    <property type="entry name" value="zf-C2H2"/>
    <property type="match status" value="3"/>
</dbReference>
<dbReference type="SMART" id="SM00349">
    <property type="entry name" value="KRAB"/>
    <property type="match status" value="1"/>
</dbReference>
<dbReference type="SMART" id="SM00355">
    <property type="entry name" value="ZnF_C2H2"/>
    <property type="match status" value="3"/>
</dbReference>
<dbReference type="SUPFAM" id="SSF57667">
    <property type="entry name" value="beta-beta-alpha zinc fingers"/>
    <property type="match status" value="2"/>
</dbReference>
<dbReference type="SUPFAM" id="SSF109640">
    <property type="entry name" value="KRAB domain (Kruppel-associated box)"/>
    <property type="match status" value="1"/>
</dbReference>
<dbReference type="PROSITE" id="PS50805">
    <property type="entry name" value="KRAB"/>
    <property type="match status" value="1"/>
</dbReference>
<dbReference type="PROSITE" id="PS00028">
    <property type="entry name" value="ZINC_FINGER_C2H2_1"/>
    <property type="match status" value="3"/>
</dbReference>
<dbReference type="PROSITE" id="PS50157">
    <property type="entry name" value="ZINC_FINGER_C2H2_2"/>
    <property type="match status" value="3"/>
</dbReference>
<gene>
    <name type="primary">ZNF487</name>
    <name type="synonym">KRBO1</name>
    <name type="synonym">ZNF487P</name>
</gene>
<name>ZN487_HUMAN</name>